<dbReference type="EMBL" id="CM009301">
    <property type="protein sequence ID" value="EEE96379.1"/>
    <property type="molecule type" value="Genomic_DNA"/>
</dbReference>
<dbReference type="SMR" id="B9I3X5"/>
<dbReference type="STRING" id="3694.B9I3X5"/>
<dbReference type="EnsemblPlants" id="Potri.012G104300.1.v4.1">
    <property type="protein sequence ID" value="Potri.012G104300.1.v4.1"/>
    <property type="gene ID" value="Potri.012G104300.v4.1"/>
</dbReference>
<dbReference type="Gramene" id="Potri.012G104300.1.v4.1">
    <property type="protein sequence ID" value="Potri.012G104300.1.v4.1"/>
    <property type="gene ID" value="Potri.012G104300.v4.1"/>
</dbReference>
<dbReference type="KEGG" id="pop:7484872"/>
<dbReference type="eggNOG" id="ENOG502S695">
    <property type="taxonomic scope" value="Eukaryota"/>
</dbReference>
<dbReference type="HOGENOM" id="CLU_066104_3_0_1"/>
<dbReference type="InParanoid" id="B9I3X5"/>
<dbReference type="OMA" id="GNTHTGW"/>
<dbReference type="OrthoDB" id="1904499at2759"/>
<dbReference type="Proteomes" id="UP000006729">
    <property type="component" value="Chromosome 12"/>
</dbReference>
<dbReference type="ExpressionAtlas" id="B9I3X5">
    <property type="expression patterns" value="baseline and differential"/>
</dbReference>
<dbReference type="GO" id="GO:0005886">
    <property type="term" value="C:plasma membrane"/>
    <property type="evidence" value="ECO:0007669"/>
    <property type="project" value="UniProtKB-SubCell"/>
</dbReference>
<dbReference type="InterPro" id="IPR006459">
    <property type="entry name" value="CASP/CASPL"/>
</dbReference>
<dbReference type="InterPro" id="IPR006702">
    <property type="entry name" value="CASP_dom"/>
</dbReference>
<dbReference type="InterPro" id="IPR044173">
    <property type="entry name" value="CASPL"/>
</dbReference>
<dbReference type="NCBIfam" id="TIGR01569">
    <property type="entry name" value="A_tha_TIGR01569"/>
    <property type="match status" value="1"/>
</dbReference>
<dbReference type="PANTHER" id="PTHR36488">
    <property type="entry name" value="CASP-LIKE PROTEIN 1U1"/>
    <property type="match status" value="1"/>
</dbReference>
<dbReference type="PANTHER" id="PTHR36488:SF8">
    <property type="entry name" value="CASP-LIKE PROTEIN 1U1"/>
    <property type="match status" value="1"/>
</dbReference>
<dbReference type="Pfam" id="PF04535">
    <property type="entry name" value="CASP_dom"/>
    <property type="match status" value="1"/>
</dbReference>
<accession>B9I3X5</accession>
<organism>
    <name type="scientific">Populus trichocarpa</name>
    <name type="common">Western balsam poplar</name>
    <name type="synonym">Populus balsamifera subsp. trichocarpa</name>
    <dbReference type="NCBI Taxonomy" id="3694"/>
    <lineage>
        <taxon>Eukaryota</taxon>
        <taxon>Viridiplantae</taxon>
        <taxon>Streptophyta</taxon>
        <taxon>Embryophyta</taxon>
        <taxon>Tracheophyta</taxon>
        <taxon>Spermatophyta</taxon>
        <taxon>Magnoliopsida</taxon>
        <taxon>eudicotyledons</taxon>
        <taxon>Gunneridae</taxon>
        <taxon>Pentapetalae</taxon>
        <taxon>rosids</taxon>
        <taxon>fabids</taxon>
        <taxon>Malpighiales</taxon>
        <taxon>Salicaceae</taxon>
        <taxon>Saliceae</taxon>
        <taxon>Populus</taxon>
    </lineage>
</organism>
<feature type="chain" id="PRO_0000412034" description="CASP-like protein 1F2">
    <location>
        <begin position="1"/>
        <end position="181"/>
    </location>
</feature>
<feature type="topological domain" description="Cytoplasmic" evidence="2">
    <location>
        <begin position="1"/>
        <end position="18"/>
    </location>
</feature>
<feature type="transmembrane region" description="Helical" evidence="2">
    <location>
        <begin position="19"/>
        <end position="39"/>
    </location>
</feature>
<feature type="topological domain" description="Extracellular" evidence="2">
    <location>
        <begin position="40"/>
        <end position="70"/>
    </location>
</feature>
<feature type="transmembrane region" description="Helical" evidence="2">
    <location>
        <begin position="71"/>
        <end position="91"/>
    </location>
</feature>
<feature type="topological domain" description="Cytoplasmic" evidence="2">
    <location>
        <begin position="92"/>
        <end position="100"/>
    </location>
</feature>
<feature type="transmembrane region" description="Helical" evidence="2">
    <location>
        <begin position="101"/>
        <end position="121"/>
    </location>
</feature>
<feature type="topological domain" description="Extracellular" evidence="2">
    <location>
        <begin position="122"/>
        <end position="150"/>
    </location>
</feature>
<feature type="transmembrane region" description="Helical" evidence="2">
    <location>
        <begin position="151"/>
        <end position="171"/>
    </location>
</feature>
<feature type="topological domain" description="Cytoplasmic" evidence="2">
    <location>
        <begin position="172"/>
        <end position="181"/>
    </location>
</feature>
<feature type="glycosylation site" description="N-linked (GlcNAc...) asparagine" evidence="2">
    <location>
        <position position="59"/>
    </location>
</feature>
<sequence>MADIETKSSQNQPLKTQNIFIGAQIFLRIVVIAASFASTWLMLTNKQTIDIGGFVLDANYSYSPEFKFLSYANIVVGAFSFVSLLFLVLVGRRSSNPTYYFILFLHDLALMSLVLGGCAAATVIGSLGKYGNSHTGWMQICDHFGKFCKRATTSVAFSYFSLVCLLILTITSASKSRQIQV</sequence>
<keyword id="KW-1003">Cell membrane</keyword>
<keyword id="KW-0325">Glycoprotein</keyword>
<keyword id="KW-0472">Membrane</keyword>
<keyword id="KW-1185">Reference proteome</keyword>
<keyword id="KW-0812">Transmembrane</keyword>
<keyword id="KW-1133">Transmembrane helix</keyword>
<name>CSPL3_POPTR</name>
<comment type="subunit">
    <text evidence="1">Homodimer and heterodimers.</text>
</comment>
<comment type="subcellular location">
    <subcellularLocation>
        <location evidence="1">Cell membrane</location>
        <topology evidence="1">Multi-pass membrane protein</topology>
    </subcellularLocation>
</comment>
<comment type="similarity">
    <text evidence="3">Belongs to the Casparian strip membrane proteins (CASP) family.</text>
</comment>
<proteinExistence type="inferred from homology"/>
<gene>
    <name type="ORF">POPTRDRAFT_823430</name>
</gene>
<evidence type="ECO:0000250" key="1"/>
<evidence type="ECO:0000255" key="2"/>
<evidence type="ECO:0000305" key="3"/>
<reference key="1">
    <citation type="journal article" date="2006" name="Science">
        <title>The genome of black cottonwood, Populus trichocarpa (Torr. &amp; Gray).</title>
        <authorList>
            <person name="Tuskan G.A."/>
            <person name="Difazio S."/>
            <person name="Jansson S."/>
            <person name="Bohlmann J."/>
            <person name="Grigoriev I."/>
            <person name="Hellsten U."/>
            <person name="Putnam N."/>
            <person name="Ralph S."/>
            <person name="Rombauts S."/>
            <person name="Salamov A."/>
            <person name="Schein J."/>
            <person name="Sterck L."/>
            <person name="Aerts A."/>
            <person name="Bhalerao R.R."/>
            <person name="Bhalerao R.P."/>
            <person name="Blaudez D."/>
            <person name="Boerjan W."/>
            <person name="Brun A."/>
            <person name="Brunner A."/>
            <person name="Busov V."/>
            <person name="Campbell M."/>
            <person name="Carlson J."/>
            <person name="Chalot M."/>
            <person name="Chapman J."/>
            <person name="Chen G.-L."/>
            <person name="Cooper D."/>
            <person name="Coutinho P.M."/>
            <person name="Couturier J."/>
            <person name="Covert S."/>
            <person name="Cronk Q."/>
            <person name="Cunningham R."/>
            <person name="Davis J."/>
            <person name="Degroeve S."/>
            <person name="Dejardin A."/>
            <person name="dePamphilis C.W."/>
            <person name="Detter J."/>
            <person name="Dirks B."/>
            <person name="Dubchak I."/>
            <person name="Duplessis S."/>
            <person name="Ehlting J."/>
            <person name="Ellis B."/>
            <person name="Gendler K."/>
            <person name="Goodstein D."/>
            <person name="Gribskov M."/>
            <person name="Grimwood J."/>
            <person name="Groover A."/>
            <person name="Gunter L."/>
            <person name="Hamberger B."/>
            <person name="Heinze B."/>
            <person name="Helariutta Y."/>
            <person name="Henrissat B."/>
            <person name="Holligan D."/>
            <person name="Holt R."/>
            <person name="Huang W."/>
            <person name="Islam-Faridi N."/>
            <person name="Jones S."/>
            <person name="Jones-Rhoades M."/>
            <person name="Jorgensen R."/>
            <person name="Joshi C."/>
            <person name="Kangasjaervi J."/>
            <person name="Karlsson J."/>
            <person name="Kelleher C."/>
            <person name="Kirkpatrick R."/>
            <person name="Kirst M."/>
            <person name="Kohler A."/>
            <person name="Kalluri U."/>
            <person name="Larimer F."/>
            <person name="Leebens-Mack J."/>
            <person name="Leple J.-C."/>
            <person name="Locascio P."/>
            <person name="Lou Y."/>
            <person name="Lucas S."/>
            <person name="Martin F."/>
            <person name="Montanini B."/>
            <person name="Napoli C."/>
            <person name="Nelson D.R."/>
            <person name="Nelson C."/>
            <person name="Nieminen K."/>
            <person name="Nilsson O."/>
            <person name="Pereda V."/>
            <person name="Peter G."/>
            <person name="Philippe R."/>
            <person name="Pilate G."/>
            <person name="Poliakov A."/>
            <person name="Razumovskaya J."/>
            <person name="Richardson P."/>
            <person name="Rinaldi C."/>
            <person name="Ritland K."/>
            <person name="Rouze P."/>
            <person name="Ryaboy D."/>
            <person name="Schmutz J."/>
            <person name="Schrader J."/>
            <person name="Segerman B."/>
            <person name="Shin H."/>
            <person name="Siddiqui A."/>
            <person name="Sterky F."/>
            <person name="Terry A."/>
            <person name="Tsai C.-J."/>
            <person name="Uberbacher E."/>
            <person name="Unneberg P."/>
            <person name="Vahala J."/>
            <person name="Wall K."/>
            <person name="Wessler S."/>
            <person name="Yang G."/>
            <person name="Yin T."/>
            <person name="Douglas C."/>
            <person name="Marra M."/>
            <person name="Sandberg G."/>
            <person name="Van de Peer Y."/>
            <person name="Rokhsar D.S."/>
        </authorList>
    </citation>
    <scope>NUCLEOTIDE SEQUENCE [LARGE SCALE GENOMIC DNA]</scope>
    <source>
        <strain>cv. Nisqually</strain>
    </source>
</reference>
<reference key="2">
    <citation type="submission" date="2008-12" db="EMBL/GenBank/DDBJ databases">
        <authorList>
            <consortium name="US DOE Joint Genome Institute (JGI-PGF)"/>
            <person name="Grigoriev I.V."/>
            <person name="Terry A."/>
            <person name="Salamov A.A."/>
            <person name="Otillar R."/>
            <person name="Lou Y."/>
            <person name="Lucas S."/>
            <person name="Hammon N."/>
            <person name="Glavina del Rio T."/>
            <person name="Detter J."/>
            <person name="Kalin E."/>
            <person name="Tice H."/>
            <person name="Pitluck S."/>
            <person name="Chapman J."/>
            <person name="Putnam N.H."/>
            <person name="Brunner A."/>
            <person name="Busov V."/>
            <person name="Campbell M."/>
            <person name="Chalot M."/>
            <person name="Covert S."/>
            <person name="Davis J."/>
            <person name="DiFazio S."/>
            <person name="Gribskov M."/>
            <person name="Gunter L."/>
            <person name="Hamberger B."/>
            <person name="Jansson S."/>
            <person name="Joshi C."/>
            <person name="Larimer F."/>
            <person name="Martin F."/>
            <person name="Napoli C."/>
            <person name="Nelson D."/>
            <person name="Ralph S."/>
            <person name="Rombauts S."/>
            <person name="Rouze P."/>
            <person name="Schrader J."/>
            <person name="Tsai C."/>
            <person name="Vahala J."/>
            <person name="Tuskan G."/>
            <person name="Rokhsar D."/>
        </authorList>
    </citation>
    <scope>GENOME REANNOTATION</scope>
    <source>
        <strain>cv. Nisqually</strain>
    </source>
</reference>
<reference key="3">
    <citation type="journal article" date="2014" name="Plant Physiol.">
        <title>Functional and evolutionary analysis of the CASPARIAN STRIP MEMBRANE DOMAIN PROTEIN family.</title>
        <authorList>
            <person name="Roppolo D."/>
            <person name="Boeckmann B."/>
            <person name="Pfister A."/>
            <person name="Boutet E."/>
            <person name="Rubio M.C."/>
            <person name="Denervaud-Tendon V."/>
            <person name="Vermeer J.E."/>
            <person name="Gheyselinck J."/>
            <person name="Xenarios I."/>
            <person name="Geldner N."/>
        </authorList>
    </citation>
    <scope>GENE FAMILY</scope>
    <scope>NOMENCLATURE</scope>
</reference>
<protein>
    <recommendedName>
        <fullName>CASP-like protein 1F2</fullName>
        <shortName>PtCASPL1F2</shortName>
    </recommendedName>
</protein>